<protein>
    <recommendedName>
        <fullName evidence="1">Peptide deformylase</fullName>
        <shortName evidence="1">PDF</shortName>
        <ecNumber evidence="1">3.5.1.88</ecNumber>
    </recommendedName>
    <alternativeName>
        <fullName evidence="1">Polypeptide deformylase</fullName>
    </alternativeName>
</protein>
<name>DEF_NEIMA</name>
<proteinExistence type="inferred from homology"/>
<feature type="chain" id="PRO_0000082807" description="Peptide deformylase">
    <location>
        <begin position="1"/>
        <end position="167"/>
    </location>
</feature>
<feature type="active site" evidence="1">
    <location>
        <position position="134"/>
    </location>
</feature>
<feature type="binding site" evidence="1">
    <location>
        <position position="91"/>
    </location>
    <ligand>
        <name>Fe cation</name>
        <dbReference type="ChEBI" id="CHEBI:24875"/>
    </ligand>
</feature>
<feature type="binding site" evidence="1">
    <location>
        <position position="133"/>
    </location>
    <ligand>
        <name>Fe cation</name>
        <dbReference type="ChEBI" id="CHEBI:24875"/>
    </ligand>
</feature>
<feature type="binding site" evidence="1">
    <location>
        <position position="137"/>
    </location>
    <ligand>
        <name>Fe cation</name>
        <dbReference type="ChEBI" id="CHEBI:24875"/>
    </ligand>
</feature>
<dbReference type="EC" id="3.5.1.88" evidence="1"/>
<dbReference type="EMBL" id="AL157959">
    <property type="protein sequence ID" value="CAM07481.1"/>
    <property type="molecule type" value="Genomic_DNA"/>
</dbReference>
<dbReference type="RefSeq" id="WP_002216218.1">
    <property type="nucleotide sequence ID" value="NC_003116.1"/>
</dbReference>
<dbReference type="SMR" id="P63915"/>
<dbReference type="EnsemblBacteria" id="CAM07481">
    <property type="protein sequence ID" value="CAM07481"/>
    <property type="gene ID" value="NMA0164"/>
</dbReference>
<dbReference type="GeneID" id="93387182"/>
<dbReference type="KEGG" id="nma:NMA0164"/>
<dbReference type="HOGENOM" id="CLU_061901_2_1_4"/>
<dbReference type="Proteomes" id="UP000000626">
    <property type="component" value="Chromosome"/>
</dbReference>
<dbReference type="GO" id="GO:0046872">
    <property type="term" value="F:metal ion binding"/>
    <property type="evidence" value="ECO:0007669"/>
    <property type="project" value="UniProtKB-KW"/>
</dbReference>
<dbReference type="GO" id="GO:0042586">
    <property type="term" value="F:peptide deformylase activity"/>
    <property type="evidence" value="ECO:0007669"/>
    <property type="project" value="UniProtKB-UniRule"/>
</dbReference>
<dbReference type="GO" id="GO:0043686">
    <property type="term" value="P:co-translational protein modification"/>
    <property type="evidence" value="ECO:0007669"/>
    <property type="project" value="TreeGrafter"/>
</dbReference>
<dbReference type="GO" id="GO:0006412">
    <property type="term" value="P:translation"/>
    <property type="evidence" value="ECO:0007669"/>
    <property type="project" value="UniProtKB-UniRule"/>
</dbReference>
<dbReference type="CDD" id="cd00487">
    <property type="entry name" value="Pep_deformylase"/>
    <property type="match status" value="1"/>
</dbReference>
<dbReference type="FunFam" id="3.90.45.10:FF:000001">
    <property type="entry name" value="Peptide deformylase"/>
    <property type="match status" value="1"/>
</dbReference>
<dbReference type="Gene3D" id="3.90.45.10">
    <property type="entry name" value="Peptide deformylase"/>
    <property type="match status" value="1"/>
</dbReference>
<dbReference type="HAMAP" id="MF_00163">
    <property type="entry name" value="Pep_deformylase"/>
    <property type="match status" value="1"/>
</dbReference>
<dbReference type="InterPro" id="IPR023635">
    <property type="entry name" value="Peptide_deformylase"/>
</dbReference>
<dbReference type="InterPro" id="IPR036821">
    <property type="entry name" value="Peptide_deformylase_sf"/>
</dbReference>
<dbReference type="NCBIfam" id="TIGR00079">
    <property type="entry name" value="pept_deformyl"/>
    <property type="match status" value="1"/>
</dbReference>
<dbReference type="NCBIfam" id="NF001159">
    <property type="entry name" value="PRK00150.1-3"/>
    <property type="match status" value="1"/>
</dbReference>
<dbReference type="PANTHER" id="PTHR10458">
    <property type="entry name" value="PEPTIDE DEFORMYLASE"/>
    <property type="match status" value="1"/>
</dbReference>
<dbReference type="PANTHER" id="PTHR10458:SF22">
    <property type="entry name" value="PEPTIDE DEFORMYLASE"/>
    <property type="match status" value="1"/>
</dbReference>
<dbReference type="Pfam" id="PF01327">
    <property type="entry name" value="Pep_deformylase"/>
    <property type="match status" value="1"/>
</dbReference>
<dbReference type="PIRSF" id="PIRSF004749">
    <property type="entry name" value="Pep_def"/>
    <property type="match status" value="1"/>
</dbReference>
<dbReference type="PRINTS" id="PR01576">
    <property type="entry name" value="PDEFORMYLASE"/>
</dbReference>
<dbReference type="SUPFAM" id="SSF56420">
    <property type="entry name" value="Peptide deformylase"/>
    <property type="match status" value="1"/>
</dbReference>
<keyword id="KW-0378">Hydrolase</keyword>
<keyword id="KW-0408">Iron</keyword>
<keyword id="KW-0479">Metal-binding</keyword>
<keyword id="KW-0648">Protein biosynthesis</keyword>
<reference key="1">
    <citation type="journal article" date="2000" name="Nature">
        <title>Complete DNA sequence of a serogroup A strain of Neisseria meningitidis Z2491.</title>
        <authorList>
            <person name="Parkhill J."/>
            <person name="Achtman M."/>
            <person name="James K.D."/>
            <person name="Bentley S.D."/>
            <person name="Churcher C.M."/>
            <person name="Klee S.R."/>
            <person name="Morelli G."/>
            <person name="Basham D."/>
            <person name="Brown D."/>
            <person name="Chillingworth T."/>
            <person name="Davies R.M."/>
            <person name="Davis P."/>
            <person name="Devlin K."/>
            <person name="Feltwell T."/>
            <person name="Hamlin N."/>
            <person name="Holroyd S."/>
            <person name="Jagels K."/>
            <person name="Leather S."/>
            <person name="Moule S."/>
            <person name="Mungall K.L."/>
            <person name="Quail M.A."/>
            <person name="Rajandream M.A."/>
            <person name="Rutherford K.M."/>
            <person name="Simmonds M."/>
            <person name="Skelton J."/>
            <person name="Whitehead S."/>
            <person name="Spratt B.G."/>
            <person name="Barrell B.G."/>
        </authorList>
    </citation>
    <scope>NUCLEOTIDE SEQUENCE [LARGE SCALE GENOMIC DNA]</scope>
    <source>
        <strain>DSM 15465 / Z2491</strain>
    </source>
</reference>
<organism>
    <name type="scientific">Neisseria meningitidis serogroup A / serotype 4A (strain DSM 15465 / Z2491)</name>
    <dbReference type="NCBI Taxonomy" id="122587"/>
    <lineage>
        <taxon>Bacteria</taxon>
        <taxon>Pseudomonadati</taxon>
        <taxon>Pseudomonadota</taxon>
        <taxon>Betaproteobacteria</taxon>
        <taxon>Neisseriales</taxon>
        <taxon>Neisseriaceae</taxon>
        <taxon>Neisseria</taxon>
    </lineage>
</organism>
<accession>P63915</accession>
<accession>A1IP24</accession>
<accession>Q9JQN0</accession>
<sequence length="167" mass="19115">MALLNILQYPDERLHTVAKPVEQVDERIRKLIADMFETMYESRGIGLAATQVDVHERVVVMDLTEDRSEPRVFINPVIVEKDGETTYEEGCLSVPGIYDTVTRAERVKVEALNEKGEKFTLEADGLLAICVQHELDHLMGIVFVERLSQLKQGRIKTKLKKRQKHTI</sequence>
<evidence type="ECO:0000255" key="1">
    <source>
        <dbReference type="HAMAP-Rule" id="MF_00163"/>
    </source>
</evidence>
<gene>
    <name evidence="1" type="primary">def</name>
    <name type="ordered locus">NMA0164</name>
</gene>
<comment type="function">
    <text evidence="1">Removes the formyl group from the N-terminal Met of newly synthesized proteins. Requires at least a dipeptide for an efficient rate of reaction. N-terminal L-methionine is a prerequisite for activity but the enzyme has broad specificity at other positions.</text>
</comment>
<comment type="catalytic activity">
    <reaction evidence="1">
        <text>N-terminal N-formyl-L-methionyl-[peptide] + H2O = N-terminal L-methionyl-[peptide] + formate</text>
        <dbReference type="Rhea" id="RHEA:24420"/>
        <dbReference type="Rhea" id="RHEA-COMP:10639"/>
        <dbReference type="Rhea" id="RHEA-COMP:10640"/>
        <dbReference type="ChEBI" id="CHEBI:15377"/>
        <dbReference type="ChEBI" id="CHEBI:15740"/>
        <dbReference type="ChEBI" id="CHEBI:49298"/>
        <dbReference type="ChEBI" id="CHEBI:64731"/>
        <dbReference type="EC" id="3.5.1.88"/>
    </reaction>
</comment>
<comment type="cofactor">
    <cofactor evidence="1">
        <name>Fe(2+)</name>
        <dbReference type="ChEBI" id="CHEBI:29033"/>
    </cofactor>
    <text evidence="1">Binds 1 Fe(2+) ion.</text>
</comment>
<comment type="similarity">
    <text evidence="1">Belongs to the polypeptide deformylase family.</text>
</comment>